<accession>B1IUI4</accession>
<comment type="function">
    <text evidence="1">Transports acetate.</text>
</comment>
<comment type="subcellular location">
    <subcellularLocation>
        <location evidence="1">Cell inner membrane</location>
        <topology evidence="1">Multi-pass membrane protein</topology>
    </subcellularLocation>
</comment>
<comment type="similarity">
    <text evidence="1">Belongs to the sodium:solute symporter (SSF) (TC 2.A.21) family.</text>
</comment>
<evidence type="ECO:0000255" key="1">
    <source>
        <dbReference type="HAMAP-Rule" id="MF_01426"/>
    </source>
</evidence>
<organism>
    <name type="scientific">Escherichia coli (strain ATCC 8739 / DSM 1576 / NBRC 3972 / NCIMB 8545 / WDCM 00012 / Crooks)</name>
    <dbReference type="NCBI Taxonomy" id="481805"/>
    <lineage>
        <taxon>Bacteria</taxon>
        <taxon>Pseudomonadati</taxon>
        <taxon>Pseudomonadota</taxon>
        <taxon>Gammaproteobacteria</taxon>
        <taxon>Enterobacterales</taxon>
        <taxon>Enterobacteriaceae</taxon>
        <taxon>Escherichia</taxon>
    </lineage>
</organism>
<name>ACTP_ECOLC</name>
<reference key="1">
    <citation type="submission" date="2008-02" db="EMBL/GenBank/DDBJ databases">
        <title>Complete sequence of Escherichia coli C str. ATCC 8739.</title>
        <authorList>
            <person name="Copeland A."/>
            <person name="Lucas S."/>
            <person name="Lapidus A."/>
            <person name="Glavina del Rio T."/>
            <person name="Dalin E."/>
            <person name="Tice H."/>
            <person name="Bruce D."/>
            <person name="Goodwin L."/>
            <person name="Pitluck S."/>
            <person name="Kiss H."/>
            <person name="Brettin T."/>
            <person name="Detter J.C."/>
            <person name="Han C."/>
            <person name="Kuske C.R."/>
            <person name="Schmutz J."/>
            <person name="Larimer F."/>
            <person name="Land M."/>
            <person name="Hauser L."/>
            <person name="Kyrpides N."/>
            <person name="Mikhailova N."/>
            <person name="Ingram L."/>
            <person name="Richardson P."/>
        </authorList>
    </citation>
    <scope>NUCLEOTIDE SEQUENCE [LARGE SCALE GENOMIC DNA]</scope>
    <source>
        <strain>ATCC 8739 / DSM 1576 / NBRC 3972 / NCIMB 8545 / WDCM 00012 / Crooks</strain>
    </source>
</reference>
<keyword id="KW-0997">Cell inner membrane</keyword>
<keyword id="KW-1003">Cell membrane</keyword>
<keyword id="KW-0406">Ion transport</keyword>
<keyword id="KW-0472">Membrane</keyword>
<keyword id="KW-0915">Sodium</keyword>
<keyword id="KW-0739">Sodium transport</keyword>
<keyword id="KW-0769">Symport</keyword>
<keyword id="KW-0812">Transmembrane</keyword>
<keyword id="KW-1133">Transmembrane helix</keyword>
<keyword id="KW-0813">Transport</keyword>
<protein>
    <recommendedName>
        <fullName evidence="1">Cation/acetate symporter ActP</fullName>
    </recommendedName>
    <alternativeName>
        <fullName evidence="1">Acetate permease</fullName>
    </alternativeName>
    <alternativeName>
        <fullName evidence="1">Acetate transporter ActP</fullName>
    </alternativeName>
</protein>
<dbReference type="EMBL" id="CP000946">
    <property type="protein sequence ID" value="ACA79561.1"/>
    <property type="molecule type" value="Genomic_DNA"/>
</dbReference>
<dbReference type="RefSeq" id="WP_000832573.1">
    <property type="nucleotide sequence ID" value="NZ_MTFT01000033.1"/>
</dbReference>
<dbReference type="SMR" id="B1IUI4"/>
<dbReference type="KEGG" id="ecl:EcolC_3960"/>
<dbReference type="HOGENOM" id="CLU_018808_8_3_6"/>
<dbReference type="GO" id="GO:0005886">
    <property type="term" value="C:plasma membrane"/>
    <property type="evidence" value="ECO:0007669"/>
    <property type="project" value="UniProtKB-SubCell"/>
</dbReference>
<dbReference type="GO" id="GO:0015123">
    <property type="term" value="F:acetate transmembrane transporter activity"/>
    <property type="evidence" value="ECO:0007669"/>
    <property type="project" value="UniProtKB-UniRule"/>
</dbReference>
<dbReference type="GO" id="GO:0043879">
    <property type="term" value="F:glycolate transmembrane transporter activity"/>
    <property type="evidence" value="ECO:0007669"/>
    <property type="project" value="InterPro"/>
</dbReference>
<dbReference type="GO" id="GO:0015293">
    <property type="term" value="F:symporter activity"/>
    <property type="evidence" value="ECO:0007669"/>
    <property type="project" value="UniProtKB-KW"/>
</dbReference>
<dbReference type="GO" id="GO:0006847">
    <property type="term" value="P:plasma membrane acetate transport"/>
    <property type="evidence" value="ECO:0007669"/>
    <property type="project" value="TreeGrafter"/>
</dbReference>
<dbReference type="GO" id="GO:0006814">
    <property type="term" value="P:sodium ion transport"/>
    <property type="evidence" value="ECO:0007669"/>
    <property type="project" value="UniProtKB-KW"/>
</dbReference>
<dbReference type="CDD" id="cd11480">
    <property type="entry name" value="SLC5sbd_u4"/>
    <property type="match status" value="1"/>
</dbReference>
<dbReference type="FunFam" id="1.20.1730.10:FF:000001">
    <property type="entry name" value="Cation/acetate symporter ActP"/>
    <property type="match status" value="1"/>
</dbReference>
<dbReference type="Gene3D" id="1.20.1730.10">
    <property type="entry name" value="Sodium/glucose cotransporter"/>
    <property type="match status" value="1"/>
</dbReference>
<dbReference type="HAMAP" id="MF_01426">
    <property type="entry name" value="Acet_symport_ActP"/>
    <property type="match status" value="1"/>
</dbReference>
<dbReference type="InterPro" id="IPR014083">
    <property type="entry name" value="Cation/Ac_symporter_ActP"/>
</dbReference>
<dbReference type="InterPro" id="IPR038377">
    <property type="entry name" value="Na/Glc_symporter_sf"/>
</dbReference>
<dbReference type="InterPro" id="IPR001734">
    <property type="entry name" value="Na/solute_symporter"/>
</dbReference>
<dbReference type="InterPro" id="IPR018212">
    <property type="entry name" value="Na/solute_symporter_CS"/>
</dbReference>
<dbReference type="InterPro" id="IPR050277">
    <property type="entry name" value="Sodium:Solute_Symporter"/>
</dbReference>
<dbReference type="NCBIfam" id="NF006903">
    <property type="entry name" value="PRK09395.1"/>
    <property type="match status" value="1"/>
</dbReference>
<dbReference type="NCBIfam" id="NF009135">
    <property type="entry name" value="PRK12488.1"/>
    <property type="match status" value="1"/>
</dbReference>
<dbReference type="NCBIfam" id="TIGR00813">
    <property type="entry name" value="sss"/>
    <property type="match status" value="1"/>
</dbReference>
<dbReference type="NCBIfam" id="TIGR02711">
    <property type="entry name" value="symport_actP"/>
    <property type="match status" value="1"/>
</dbReference>
<dbReference type="PANTHER" id="PTHR48086:SF6">
    <property type="entry name" value="CATION_ACETATE SYMPORTER ACTP"/>
    <property type="match status" value="1"/>
</dbReference>
<dbReference type="PANTHER" id="PTHR48086">
    <property type="entry name" value="SODIUM/PROLINE SYMPORTER-RELATED"/>
    <property type="match status" value="1"/>
</dbReference>
<dbReference type="Pfam" id="PF00474">
    <property type="entry name" value="SSF"/>
    <property type="match status" value="1"/>
</dbReference>
<dbReference type="PROSITE" id="PS00456">
    <property type="entry name" value="NA_SOLUT_SYMP_1"/>
    <property type="match status" value="1"/>
</dbReference>
<dbReference type="PROSITE" id="PS00457">
    <property type="entry name" value="NA_SOLUT_SYMP_2"/>
    <property type="match status" value="1"/>
</dbReference>
<dbReference type="PROSITE" id="PS50283">
    <property type="entry name" value="NA_SOLUT_SYMP_3"/>
    <property type="match status" value="1"/>
</dbReference>
<feature type="chain" id="PRO_1000087424" description="Cation/acetate symporter ActP">
    <location>
        <begin position="1"/>
        <end position="549"/>
    </location>
</feature>
<feature type="transmembrane region" description="Helical" evidence="1">
    <location>
        <begin position="33"/>
        <end position="53"/>
    </location>
</feature>
<feature type="transmembrane region" description="Helical" evidence="1">
    <location>
        <begin position="77"/>
        <end position="97"/>
    </location>
</feature>
<feature type="transmembrane region" description="Helical" evidence="1">
    <location>
        <begin position="103"/>
        <end position="123"/>
    </location>
</feature>
<feature type="transmembrane region" description="Helical" evidence="1">
    <location>
        <begin position="148"/>
        <end position="168"/>
    </location>
</feature>
<feature type="transmembrane region" description="Helical" evidence="1">
    <location>
        <begin position="183"/>
        <end position="203"/>
    </location>
</feature>
<feature type="transmembrane region" description="Helical" evidence="1">
    <location>
        <begin position="206"/>
        <end position="226"/>
    </location>
</feature>
<feature type="transmembrane region" description="Helical" evidence="1">
    <location>
        <begin position="262"/>
        <end position="282"/>
    </location>
</feature>
<feature type="transmembrane region" description="Helical" evidence="1">
    <location>
        <begin position="303"/>
        <end position="323"/>
    </location>
</feature>
<feature type="transmembrane region" description="Helical" evidence="1">
    <location>
        <begin position="355"/>
        <end position="375"/>
    </location>
</feature>
<feature type="transmembrane region" description="Helical" evidence="1">
    <location>
        <begin position="404"/>
        <end position="424"/>
    </location>
</feature>
<feature type="transmembrane region" description="Helical" evidence="1">
    <location>
        <begin position="428"/>
        <end position="448"/>
    </location>
</feature>
<feature type="transmembrane region" description="Helical" evidence="1">
    <location>
        <begin position="464"/>
        <end position="484"/>
    </location>
</feature>
<feature type="transmembrane region" description="Helical" evidence="1">
    <location>
        <begin position="493"/>
        <end position="513"/>
    </location>
</feature>
<sequence>MKRVLTALAATLPFAANAADAISGAVERQPTNWQAIIMFLIFVVFTLGITYWASKRVRSRSDYYTAGGNITGFQNGLAIAGDYMSAASFLGISALVFTSGYDGLIYSLGFLVGWPIILFLIAERLRNLGRYTFADVASYRLKQGPIRILSACGSLVVVALYLIAQMVGAGKLIELLFGLNYHIAVVLVGVLMMMYVLFGGMLATTWVQIIKAVLLLFGASFMAFMVMKHVGFSFNNLFSEAMAVHPKGVDIMKPGGLVKDPISALSLGLGLMFGTAGLPHILMRFFTVSDAREARKSVFYATGFMGYFYILTFIIGFGAIMLVGANPEYKDAAGHLIGGNNMAAVHLANAVGGNLFLGFISAVAFATILAVVAGLTLAGASAVSHDLYANVFKKGATEREELRVSKITVLILGVIAIILGVLFENQNIAFMVGLAFAIAASCNFPIILLSMYWSKLTTRGAMMGGWLGLITAVVLMILGPTIWVQILGHEKAIFPYEYPALFSITVAFLGIWFFSATDNSAEGARERELFRAQFIRSQTGFGVEQGRAH</sequence>
<gene>
    <name evidence="1" type="primary">actP</name>
    <name type="ordered locus">EcolC_3960</name>
</gene>
<proteinExistence type="inferred from homology"/>